<keyword id="KW-1003">Cell membrane</keyword>
<keyword id="KW-0342">GTP-binding</keyword>
<keyword id="KW-0449">Lipoprotein</keyword>
<keyword id="KW-0472">Membrane</keyword>
<keyword id="KW-0488">Methylation</keyword>
<keyword id="KW-0547">Nucleotide-binding</keyword>
<keyword id="KW-0636">Prenylation</keyword>
<keyword id="KW-1185">Reference proteome</keyword>
<accession>Q6SA80</accession>
<comment type="function">
    <text evidence="1">Binds GTP but lacks intrinsic GTPase activity and is resistant to Rho-specific GTPase-activating proteins.</text>
</comment>
<comment type="subunit">
    <text evidence="1">Binds ROCK1. Interacts with UBXD5 (By similarity).</text>
</comment>
<comment type="subcellular location">
    <subcellularLocation>
        <location evidence="3">Cell membrane</location>
        <topology evidence="3">Lipid-anchor</topology>
        <orientation evidence="3">Cytoplasmic side</orientation>
    </subcellularLocation>
</comment>
<comment type="similarity">
    <text evidence="3">Belongs to the small GTPase superfamily. Rho family.</text>
</comment>
<dbReference type="EMBL" id="AY461427">
    <property type="protein sequence ID" value="AAR23526.1"/>
    <property type="molecule type" value="mRNA"/>
</dbReference>
<dbReference type="RefSeq" id="NP_001007642.1">
    <property type="nucleotide sequence ID" value="NM_001007641.2"/>
</dbReference>
<dbReference type="SMR" id="Q6SA80"/>
<dbReference type="BioGRID" id="255043">
    <property type="interactions" value="1"/>
</dbReference>
<dbReference type="FunCoup" id="Q6SA80">
    <property type="interactions" value="1208"/>
</dbReference>
<dbReference type="STRING" id="10116.ENSRNOP00000006111"/>
<dbReference type="PhosphoSitePlus" id="Q6SA80"/>
<dbReference type="PaxDb" id="10116-ENSRNOP00000006111"/>
<dbReference type="Ensembl" id="ENSRNOT00000006111.7">
    <property type="protein sequence ID" value="ENSRNOP00000006111.3"/>
    <property type="gene ID" value="ENSRNOG00000004624.7"/>
</dbReference>
<dbReference type="GeneID" id="295588"/>
<dbReference type="KEGG" id="rno:295588"/>
<dbReference type="UCSC" id="RGD:1359690">
    <property type="organism name" value="rat"/>
</dbReference>
<dbReference type="AGR" id="RGD:1359690"/>
<dbReference type="CTD" id="390"/>
<dbReference type="RGD" id="1359690">
    <property type="gene designation" value="Rnd3"/>
</dbReference>
<dbReference type="eggNOG" id="KOG0393">
    <property type="taxonomic scope" value="Eukaryota"/>
</dbReference>
<dbReference type="GeneTree" id="ENSGT00940000157541"/>
<dbReference type="HOGENOM" id="CLU_041217_21_1_1"/>
<dbReference type="InParanoid" id="Q6SA80"/>
<dbReference type="OMA" id="RPCQKSS"/>
<dbReference type="OrthoDB" id="8830751at2759"/>
<dbReference type="PhylomeDB" id="Q6SA80"/>
<dbReference type="TreeFam" id="TF330887"/>
<dbReference type="Reactome" id="R-RNO-9696264">
    <property type="pathway name" value="RND3 GTPase cycle"/>
</dbReference>
<dbReference type="PRO" id="PR:Q6SA80"/>
<dbReference type="Proteomes" id="UP000002494">
    <property type="component" value="Chromosome 3"/>
</dbReference>
<dbReference type="Bgee" id="ENSRNOG00000004624">
    <property type="expression patterns" value="Expressed in ovary and 20 other cell types or tissues"/>
</dbReference>
<dbReference type="ExpressionAtlas" id="Q6SA80">
    <property type="expression patterns" value="baseline and differential"/>
</dbReference>
<dbReference type="GO" id="GO:0005829">
    <property type="term" value="C:cytosol"/>
    <property type="evidence" value="ECO:0000318"/>
    <property type="project" value="GO_Central"/>
</dbReference>
<dbReference type="GO" id="GO:0005886">
    <property type="term" value="C:plasma membrane"/>
    <property type="evidence" value="ECO:0000318"/>
    <property type="project" value="GO_Central"/>
</dbReference>
<dbReference type="GO" id="GO:0005525">
    <property type="term" value="F:GTP binding"/>
    <property type="evidence" value="ECO:0000318"/>
    <property type="project" value="GO_Central"/>
</dbReference>
<dbReference type="GO" id="GO:0003924">
    <property type="term" value="F:GTPase activity"/>
    <property type="evidence" value="ECO:0000318"/>
    <property type="project" value="GO_Central"/>
</dbReference>
<dbReference type="GO" id="GO:0019901">
    <property type="term" value="F:protein kinase binding"/>
    <property type="evidence" value="ECO:0000318"/>
    <property type="project" value="GO_Central"/>
</dbReference>
<dbReference type="GO" id="GO:0007015">
    <property type="term" value="P:actin filament organization"/>
    <property type="evidence" value="ECO:0000318"/>
    <property type="project" value="GO_Central"/>
</dbReference>
<dbReference type="GO" id="GO:0032956">
    <property type="term" value="P:regulation of actin cytoskeleton organization"/>
    <property type="evidence" value="ECO:0000318"/>
    <property type="project" value="GO_Central"/>
</dbReference>
<dbReference type="GO" id="GO:0007165">
    <property type="term" value="P:signal transduction"/>
    <property type="evidence" value="ECO:0000318"/>
    <property type="project" value="GO_Central"/>
</dbReference>
<dbReference type="GO" id="GO:0007264">
    <property type="term" value="P:small GTPase-mediated signal transduction"/>
    <property type="evidence" value="ECO:0007669"/>
    <property type="project" value="InterPro"/>
</dbReference>
<dbReference type="CDD" id="cd04172">
    <property type="entry name" value="Rnd3_RhoE_Rho8"/>
    <property type="match status" value="1"/>
</dbReference>
<dbReference type="FunFam" id="3.40.50.300:FF:000407">
    <property type="entry name" value="Rho-related GTP-binding protein RhoE"/>
    <property type="match status" value="1"/>
</dbReference>
<dbReference type="Gene3D" id="3.40.50.300">
    <property type="entry name" value="P-loop containing nucleotide triphosphate hydrolases"/>
    <property type="match status" value="1"/>
</dbReference>
<dbReference type="InterPro" id="IPR027417">
    <property type="entry name" value="P-loop_NTPase"/>
</dbReference>
<dbReference type="InterPro" id="IPR041843">
    <property type="entry name" value="RhoE"/>
</dbReference>
<dbReference type="InterPro" id="IPR005225">
    <property type="entry name" value="Small_GTP-bd"/>
</dbReference>
<dbReference type="InterPro" id="IPR001806">
    <property type="entry name" value="Small_GTPase"/>
</dbReference>
<dbReference type="InterPro" id="IPR003578">
    <property type="entry name" value="Small_GTPase_Rho"/>
</dbReference>
<dbReference type="NCBIfam" id="TIGR00231">
    <property type="entry name" value="small_GTP"/>
    <property type="match status" value="1"/>
</dbReference>
<dbReference type="PANTHER" id="PTHR24072">
    <property type="entry name" value="RHO FAMILY GTPASE"/>
    <property type="match status" value="1"/>
</dbReference>
<dbReference type="Pfam" id="PF00071">
    <property type="entry name" value="Ras"/>
    <property type="match status" value="1"/>
</dbReference>
<dbReference type="PRINTS" id="PR00449">
    <property type="entry name" value="RASTRNSFRMNG"/>
</dbReference>
<dbReference type="SMART" id="SM00175">
    <property type="entry name" value="RAB"/>
    <property type="match status" value="1"/>
</dbReference>
<dbReference type="SMART" id="SM00173">
    <property type="entry name" value="RAS"/>
    <property type="match status" value="1"/>
</dbReference>
<dbReference type="SMART" id="SM00174">
    <property type="entry name" value="RHO"/>
    <property type="match status" value="1"/>
</dbReference>
<dbReference type="SUPFAM" id="SSF52540">
    <property type="entry name" value="P-loop containing nucleoside triphosphate hydrolases"/>
    <property type="match status" value="1"/>
</dbReference>
<dbReference type="PROSITE" id="PS51420">
    <property type="entry name" value="RHO"/>
    <property type="match status" value="1"/>
</dbReference>
<sequence length="244" mass="27368">MKERRASQKLSSKSIMDPNQNVKCKIVVVGDSQCGKTALLHVFAKDCFPENYVPTVFENYTASFEIDTQRIELSLWDTSGSPYYDNVRPLSYPDSDAVLICFDISRPETLDSVLKKWKGEIQEFCPNTKMLLVGCKSDLRTDVSTLVELSNHRQTPVSYDQGANMAKQIGAATYIECSALQSENSVRDIFHVATLACVNKTNKNVKRNKSQRATKRISHMPSRPELSAVATDLRKDKAKSCTVM</sequence>
<feature type="chain" id="PRO_0000198881" description="Rho-related GTP-binding protein RhoE">
    <location>
        <begin position="1"/>
        <end position="241"/>
    </location>
</feature>
<feature type="propeptide" id="PRO_0000281234" description="Removed in mature form" evidence="1">
    <location>
        <begin position="242"/>
        <end position="244"/>
    </location>
</feature>
<feature type="short sequence motif" description="Effector region" evidence="2">
    <location>
        <begin position="52"/>
        <end position="60"/>
    </location>
</feature>
<feature type="binding site" evidence="1">
    <location>
        <begin position="30"/>
        <end position="37"/>
    </location>
    <ligand>
        <name>GTP</name>
        <dbReference type="ChEBI" id="CHEBI:37565"/>
    </ligand>
</feature>
<feature type="binding site" evidence="1">
    <location>
        <begin position="77"/>
        <end position="81"/>
    </location>
    <ligand>
        <name>GTP</name>
        <dbReference type="ChEBI" id="CHEBI:37565"/>
    </ligand>
</feature>
<feature type="binding site" evidence="1">
    <location>
        <begin position="135"/>
        <end position="138"/>
    </location>
    <ligand>
        <name>GTP</name>
        <dbReference type="ChEBI" id="CHEBI:37565"/>
    </ligand>
</feature>
<feature type="modified residue" description="Cysteine methyl ester" evidence="1">
    <location>
        <position position="241"/>
    </location>
</feature>
<feature type="lipid moiety-binding region" description="S-farnesyl cysteine" evidence="1">
    <location>
        <position position="241"/>
    </location>
</feature>
<reference key="1">
    <citation type="submission" date="2003-11" db="EMBL/GenBank/DDBJ databases">
        <title>Identification of RhoE as a gene modulated by heat shock in rat cardiomyocytes.</title>
        <authorList>
            <person name="Gill C.M."/>
            <person name="Stenson-Cox C."/>
            <person name="Samali A."/>
        </authorList>
    </citation>
    <scope>NUCLEOTIDE SEQUENCE [MRNA]</scope>
    <source>
        <strain>BDIX</strain>
        <tissue>Embryonic heart</tissue>
    </source>
</reference>
<protein>
    <recommendedName>
        <fullName>Rho-related GTP-binding protein RhoE</fullName>
    </recommendedName>
    <alternativeName>
        <fullName>Rho family GTPase 3</fullName>
    </alternativeName>
    <alternativeName>
        <fullName>Rnd3</fullName>
    </alternativeName>
</protein>
<proteinExistence type="evidence at transcript level"/>
<evidence type="ECO:0000250" key="1"/>
<evidence type="ECO:0000255" key="2"/>
<evidence type="ECO:0000305" key="3"/>
<gene>
    <name type="primary">Rnd3</name>
    <name type="synonym">Arhe</name>
    <name type="synonym">Rhoe</name>
</gene>
<organism>
    <name type="scientific">Rattus norvegicus</name>
    <name type="common">Rat</name>
    <dbReference type="NCBI Taxonomy" id="10116"/>
    <lineage>
        <taxon>Eukaryota</taxon>
        <taxon>Metazoa</taxon>
        <taxon>Chordata</taxon>
        <taxon>Craniata</taxon>
        <taxon>Vertebrata</taxon>
        <taxon>Euteleostomi</taxon>
        <taxon>Mammalia</taxon>
        <taxon>Eutheria</taxon>
        <taxon>Euarchontoglires</taxon>
        <taxon>Glires</taxon>
        <taxon>Rodentia</taxon>
        <taxon>Myomorpha</taxon>
        <taxon>Muroidea</taxon>
        <taxon>Muridae</taxon>
        <taxon>Murinae</taxon>
        <taxon>Rattus</taxon>
    </lineage>
</organism>
<name>RND3_RAT</name>